<evidence type="ECO:0000255" key="1">
    <source>
        <dbReference type="HAMAP-Rule" id="MF_01328"/>
    </source>
</evidence>
<evidence type="ECO:0000256" key="2">
    <source>
        <dbReference type="SAM" id="MobiDB-lite"/>
    </source>
</evidence>
<evidence type="ECO:0000305" key="3"/>
<name>RL4_BACCN</name>
<feature type="chain" id="PRO_1000086507" description="Large ribosomal subunit protein uL4">
    <location>
        <begin position="1"/>
        <end position="207"/>
    </location>
</feature>
<feature type="region of interest" description="Disordered" evidence="2">
    <location>
        <begin position="48"/>
        <end position="89"/>
    </location>
</feature>
<gene>
    <name evidence="1" type="primary">rplD</name>
    <name type="ordered locus">Bcer98_0105</name>
</gene>
<keyword id="KW-0687">Ribonucleoprotein</keyword>
<keyword id="KW-0689">Ribosomal protein</keyword>
<keyword id="KW-0694">RNA-binding</keyword>
<keyword id="KW-0699">rRNA-binding</keyword>
<sequence length="207" mass="22410">MPKVTVYNQTGSQVGEIELAEAIFGIEPNEAVLFEAVVMQRASLRQGTHKVKNRSEVSGGGRKPWRQKGTGRARQGSIRSPQWRGGGTVFGPTPRSYAYKLPKKVRRLAIKSALATKVVENNIVVLEDLVLNAPKTKDMVAVLKGLAVEKKALIVTADVNEAVELSARNIPGVTVITADGVNVLDVLHHDKLIMTKAAVEKVEEVLA</sequence>
<accession>A7GK21</accession>
<reference key="1">
    <citation type="journal article" date="2008" name="Chem. Biol. Interact.">
        <title>Extending the Bacillus cereus group genomics to putative food-borne pathogens of different toxicity.</title>
        <authorList>
            <person name="Lapidus A."/>
            <person name="Goltsman E."/>
            <person name="Auger S."/>
            <person name="Galleron N."/>
            <person name="Segurens B."/>
            <person name="Dossat C."/>
            <person name="Land M.L."/>
            <person name="Broussolle V."/>
            <person name="Brillard J."/>
            <person name="Guinebretiere M.-H."/>
            <person name="Sanchis V."/>
            <person name="Nguen-the C."/>
            <person name="Lereclus D."/>
            <person name="Richardson P."/>
            <person name="Wincker P."/>
            <person name="Weissenbach J."/>
            <person name="Ehrlich S.D."/>
            <person name="Sorokin A."/>
        </authorList>
    </citation>
    <scope>NUCLEOTIDE SEQUENCE [LARGE SCALE GENOMIC DNA]</scope>
    <source>
        <strain>DSM 22905 / CIP 110041 / 391-98 / NVH 391-98</strain>
    </source>
</reference>
<organism>
    <name type="scientific">Bacillus cytotoxicus (strain DSM 22905 / CIP 110041 / 391-98 / NVH 391-98)</name>
    <dbReference type="NCBI Taxonomy" id="315749"/>
    <lineage>
        <taxon>Bacteria</taxon>
        <taxon>Bacillati</taxon>
        <taxon>Bacillota</taxon>
        <taxon>Bacilli</taxon>
        <taxon>Bacillales</taxon>
        <taxon>Bacillaceae</taxon>
        <taxon>Bacillus</taxon>
        <taxon>Bacillus cereus group</taxon>
    </lineage>
</organism>
<proteinExistence type="inferred from homology"/>
<comment type="function">
    <text evidence="1">One of the primary rRNA binding proteins, this protein initially binds near the 5'-end of the 23S rRNA. It is important during the early stages of 50S assembly. It makes multiple contacts with different domains of the 23S rRNA in the assembled 50S subunit and ribosome.</text>
</comment>
<comment type="function">
    <text evidence="1">Forms part of the polypeptide exit tunnel.</text>
</comment>
<comment type="subunit">
    <text evidence="1">Part of the 50S ribosomal subunit.</text>
</comment>
<comment type="similarity">
    <text evidence="1">Belongs to the universal ribosomal protein uL4 family.</text>
</comment>
<protein>
    <recommendedName>
        <fullName evidence="1">Large ribosomal subunit protein uL4</fullName>
    </recommendedName>
    <alternativeName>
        <fullName evidence="3">50S ribosomal protein L4</fullName>
    </alternativeName>
</protein>
<dbReference type="EMBL" id="CP000764">
    <property type="protein sequence ID" value="ABS20479.1"/>
    <property type="molecule type" value="Genomic_DNA"/>
</dbReference>
<dbReference type="RefSeq" id="WP_011983246.1">
    <property type="nucleotide sequence ID" value="NC_009674.1"/>
</dbReference>
<dbReference type="SMR" id="A7GK21"/>
<dbReference type="STRING" id="315749.Bcer98_0105"/>
<dbReference type="GeneID" id="33895426"/>
<dbReference type="KEGG" id="bcy:Bcer98_0105"/>
<dbReference type="eggNOG" id="COG0088">
    <property type="taxonomic scope" value="Bacteria"/>
</dbReference>
<dbReference type="HOGENOM" id="CLU_041575_5_2_9"/>
<dbReference type="OrthoDB" id="9803201at2"/>
<dbReference type="Proteomes" id="UP000002300">
    <property type="component" value="Chromosome"/>
</dbReference>
<dbReference type="GO" id="GO:1990904">
    <property type="term" value="C:ribonucleoprotein complex"/>
    <property type="evidence" value="ECO:0007669"/>
    <property type="project" value="UniProtKB-KW"/>
</dbReference>
<dbReference type="GO" id="GO:0005840">
    <property type="term" value="C:ribosome"/>
    <property type="evidence" value="ECO:0007669"/>
    <property type="project" value="UniProtKB-KW"/>
</dbReference>
<dbReference type="GO" id="GO:0019843">
    <property type="term" value="F:rRNA binding"/>
    <property type="evidence" value="ECO:0007669"/>
    <property type="project" value="UniProtKB-UniRule"/>
</dbReference>
<dbReference type="GO" id="GO:0003735">
    <property type="term" value="F:structural constituent of ribosome"/>
    <property type="evidence" value="ECO:0007669"/>
    <property type="project" value="InterPro"/>
</dbReference>
<dbReference type="GO" id="GO:0006412">
    <property type="term" value="P:translation"/>
    <property type="evidence" value="ECO:0007669"/>
    <property type="project" value="UniProtKB-UniRule"/>
</dbReference>
<dbReference type="FunFam" id="3.40.1370.10:FF:000003">
    <property type="entry name" value="50S ribosomal protein L4"/>
    <property type="match status" value="1"/>
</dbReference>
<dbReference type="Gene3D" id="3.40.1370.10">
    <property type="match status" value="1"/>
</dbReference>
<dbReference type="HAMAP" id="MF_01328_B">
    <property type="entry name" value="Ribosomal_uL4_B"/>
    <property type="match status" value="1"/>
</dbReference>
<dbReference type="InterPro" id="IPR002136">
    <property type="entry name" value="Ribosomal_uL4"/>
</dbReference>
<dbReference type="InterPro" id="IPR013005">
    <property type="entry name" value="Ribosomal_uL4-like"/>
</dbReference>
<dbReference type="InterPro" id="IPR023574">
    <property type="entry name" value="Ribosomal_uL4_dom_sf"/>
</dbReference>
<dbReference type="NCBIfam" id="TIGR03953">
    <property type="entry name" value="rplD_bact"/>
    <property type="match status" value="1"/>
</dbReference>
<dbReference type="PANTHER" id="PTHR10746">
    <property type="entry name" value="50S RIBOSOMAL PROTEIN L4"/>
    <property type="match status" value="1"/>
</dbReference>
<dbReference type="PANTHER" id="PTHR10746:SF6">
    <property type="entry name" value="LARGE RIBOSOMAL SUBUNIT PROTEIN UL4M"/>
    <property type="match status" value="1"/>
</dbReference>
<dbReference type="Pfam" id="PF00573">
    <property type="entry name" value="Ribosomal_L4"/>
    <property type="match status" value="1"/>
</dbReference>
<dbReference type="SUPFAM" id="SSF52166">
    <property type="entry name" value="Ribosomal protein L4"/>
    <property type="match status" value="1"/>
</dbReference>